<proteinExistence type="inferred from homology"/>
<sequence length="485" mass="46201">MKKLSVLAISSFLIVDFLFPGYHHNSNSTKSRNLSELCYNNVDTKLFNELEVRYSTNQDHFYNYNKTIRLLNENNNEKDGNVTNERKKKPTKAVENKLKQPPGDDDDAGNDEGNDAGNDAGNAAGNAAGNAAGNAAGNAAGNAAGNAAGNAAGNAAGNAAGNDAGNAAGNAAGNAAGNAAGNAAGNAAGNAAGNAAGNAAGNAAGNDAGNAAGNAAGNAAGNAAGNAAGNAAGNDAGNAAGNAAGNAAGNAAGNAAGNAAGNAAGNAAGNAAGNAAGNDAGNAAGNAAGNAAGNAAGNAAGNAAGNAAGNAAGNAAGNAAGNAAGNAAGNAAGNAAGNAAGNAAGNAAGNAAGNAAGNAAGNAAGNAAGNEKAKNKDNKVDANTNKKDNQEENNDSSNGPSEEHIKNYLESIRNSITEEWSPCSVTCGSGIRARRKVDAKNKKPAELVLSDLETEICSLDKCSSIFNVVSNSLGIVLVLVLILFH</sequence>
<reference key="1">
    <citation type="journal article" date="1990" name="Exp. Parasitol.">
        <title>On the evolutionary history of the circumsporozoite protein in plasmodia.</title>
        <authorList>
            <person name="di Giovanni L."/>
            <person name="Cochrane A.H."/>
            <person name="Enea V."/>
        </authorList>
    </citation>
    <scope>NUCLEOTIDE SEQUENCE [GENOMIC DNA]</scope>
    <scope>POLYMORPHISM</scope>
    <scope>REPEATS</scope>
</reference>
<reference key="2">
    <citation type="journal article" date="1988" name="J. Biol. Chem.">
        <title>Circumsporozoite protein gene from Plasmodium brasilianum. Animal reservoirs for human malaria parasites?</title>
        <authorList>
            <person name="Lal A.A."/>
            <person name="la Cruz V.F."/>
            <person name="Collins W.E."/>
            <person name="Campbell G.H."/>
            <person name="Procell P.M."/>
            <person name="McCutchan T.F."/>
        </authorList>
    </citation>
    <scope>NUCLEOTIDE SEQUENCE [GENOMIC DNA] OF 93-485</scope>
</reference>
<organism>
    <name type="scientific">Plasmodium brasilianum</name>
    <dbReference type="NCBI Taxonomy" id="5824"/>
    <lineage>
        <taxon>Eukaryota</taxon>
        <taxon>Sar</taxon>
        <taxon>Alveolata</taxon>
        <taxon>Apicomplexa</taxon>
        <taxon>Aconoidasida</taxon>
        <taxon>Haemosporida</taxon>
        <taxon>Plasmodiidae</taxon>
        <taxon>Plasmodium</taxon>
        <taxon>Plasmodium (Plasmodium)</taxon>
    </lineage>
</organism>
<name>CSP_PLABR</name>
<dbReference type="EMBL" id="J03203">
    <property type="protein sequence ID" value="AAA29553.1"/>
    <property type="molecule type" value="Genomic_DNA"/>
</dbReference>
<dbReference type="PIR" id="A60610">
    <property type="entry name" value="A60610"/>
</dbReference>
<dbReference type="SMR" id="P14593"/>
<dbReference type="GlyCosmos" id="P14593">
    <property type="glycosylation" value="1 site, No reported glycans"/>
</dbReference>
<dbReference type="VEuPathDB" id="PlasmoDB:MKS88_002546"/>
<dbReference type="GO" id="GO:0009986">
    <property type="term" value="C:cell surface"/>
    <property type="evidence" value="ECO:0007669"/>
    <property type="project" value="InterPro"/>
</dbReference>
<dbReference type="GO" id="GO:0005737">
    <property type="term" value="C:cytoplasm"/>
    <property type="evidence" value="ECO:0007669"/>
    <property type="project" value="UniProtKB-SubCell"/>
</dbReference>
<dbReference type="GO" id="GO:0005886">
    <property type="term" value="C:plasma membrane"/>
    <property type="evidence" value="ECO:0007669"/>
    <property type="project" value="UniProtKB-SubCell"/>
</dbReference>
<dbReference type="GO" id="GO:0098552">
    <property type="term" value="C:side of membrane"/>
    <property type="evidence" value="ECO:0007669"/>
    <property type="project" value="UniProtKB-KW"/>
</dbReference>
<dbReference type="Gene3D" id="2.20.100.10">
    <property type="entry name" value="Thrombospondin type-1 (TSP1) repeat"/>
    <property type="match status" value="1"/>
</dbReference>
<dbReference type="InterPro" id="IPR003067">
    <property type="entry name" value="Crcmsprzoite"/>
</dbReference>
<dbReference type="InterPro" id="IPR000884">
    <property type="entry name" value="TSP1_rpt"/>
</dbReference>
<dbReference type="InterPro" id="IPR036383">
    <property type="entry name" value="TSP1_rpt_sf"/>
</dbReference>
<dbReference type="PANTHER" id="PTHR40903">
    <property type="entry name" value="GLYCINE-RICH CELL WALL STRUCTURAL PROTEIN 1-LIKE"/>
    <property type="match status" value="1"/>
</dbReference>
<dbReference type="PANTHER" id="PTHR40903:SF1">
    <property type="entry name" value="HYPHALLY REGULATED CELL WALL PROTEIN 3"/>
    <property type="match status" value="1"/>
</dbReference>
<dbReference type="Pfam" id="PF00090">
    <property type="entry name" value="TSP_1"/>
    <property type="match status" value="1"/>
</dbReference>
<dbReference type="PRINTS" id="PR01303">
    <property type="entry name" value="CRCMSPRZOITE"/>
</dbReference>
<dbReference type="SMART" id="SM00209">
    <property type="entry name" value="TSP1"/>
    <property type="match status" value="1"/>
</dbReference>
<dbReference type="SUPFAM" id="SSF82895">
    <property type="entry name" value="TSP-1 type 1 repeat"/>
    <property type="match status" value="1"/>
</dbReference>
<dbReference type="PROSITE" id="PS50092">
    <property type="entry name" value="TSP1"/>
    <property type="match status" value="1"/>
</dbReference>
<accession>P14593</accession>
<comment type="function">
    <text evidence="1 3">Essential sporozoite protein (By similarity). In the mosquito vector, required for sporozoite development in the oocyst, migration through the vector hemolymph and entry into the vector salivary glands (By similarity). In the vertebrate host, required for sporozoite migration through the host dermis and infection of host hepatocytes (By similarity). Binds to highly sulfated heparan sulfate proteoglycans (HSPGs) on the surface of host hepatocytes (By similarity).</text>
</comment>
<comment type="function">
    <molecule>Circumsporozoite protein C-terminus</molecule>
    <text evidence="3">In the vertebrate host, binds to highly sulfated heparan sulfate proteoglycans (HSPGs) on the surface of host hepatocytes and is required for sporozoite invasion of the host hepatocytes.</text>
</comment>
<comment type="subcellular location">
    <subcellularLocation>
        <location evidence="2">Cell membrane</location>
        <topology evidence="5">Lipid-anchor</topology>
        <topology evidence="5">GPI-anchor</topology>
    </subcellularLocation>
    <subcellularLocation>
        <location evidence="3">Cytoplasm</location>
    </subcellularLocation>
    <text evidence="3">Localizes to the cytoplasm and the cell membrane in oocysts at day 6 post infection and then gradually distributes over the entire cell surface of the sporoblast and the budding sporozoites.</text>
</comment>
<comment type="domain">
    <text evidence="3 4">The N-terminus is involved in the initial binding to heparan sulfate proteoglycans (HSPGs) on the surface of host hepatocytes (By similarity). The N-terminus masks the TSP type-1 (TSR) domain which maintains the sporozoites in a migratory state, enabling them to complete their journey to the salivary gland in the mosquito vector and then to the host liver. The unmasking of the TSP type-1 (TSR) domain when the sporozoite interacts with the host hepatocyte also protects sporozoites from host antibodies (By similarity).</text>
</comment>
<comment type="domain">
    <text evidence="3">The TSP type-1 (TSR) domain is required for sporozoite development and invasion. CSP has two conformational states, an adhesive conformation in which the TSP type-1 (TSR) domain is exposed and a nonadhesive conformation in which the TSR is masked by the N-terminus. TSR-exposed conformation occurs during sporozoite development in the oocyst in the mosquito vector and during host hepatocyte invasion. TSR-masked conformation occurs during sporozoite migration through the hemolymph to salivary glands in the mosquito vector and in the host dermis.</text>
</comment>
<comment type="domain">
    <text evidence="3">The GPI-anchor is essential for cell membrane localization and for sporozoite formation inside the oocyst.</text>
</comment>
<comment type="PTM">
    <text evidence="1 3">During host cell invasion, proteolytically cleaved at the cell membrane in the region I by a papain-like cysteine protease of parasite origin (By similarity). Cleavage is triggered by the sporozoite contact with highly sulfated heparan sulfate proteoglycans (HSPGs) present on the host hepatocyte cell surface (By similarity). Cleavage exposes the TSP type-1 (TSR) domain and is required for productive invasion of host hepatocytes but not for adhesion to the host cell membrane (By similarity). Cleavage is dispensable for sporozoite development in the oocyst, motility and for traversal of host and vector cells (By similarity).</text>
</comment>
<comment type="PTM">
    <text evidence="2">O-glycosylated; maybe by POFUT2.</text>
</comment>
<comment type="polymorphism">
    <text evidence="8">The sequence of the repeats varies across Plasmodium species and strains.</text>
</comment>
<comment type="similarity">
    <text evidence="10">Belongs to the plasmodium circumsporozoite protein family.</text>
</comment>
<keyword id="KW-1003">Cell membrane</keyword>
<keyword id="KW-0963">Cytoplasm</keyword>
<keyword id="KW-1015">Disulfide bond</keyword>
<keyword id="KW-0325">Glycoprotein</keyword>
<keyword id="KW-0336">GPI-anchor</keyword>
<keyword id="KW-0449">Lipoprotein</keyword>
<keyword id="KW-0461">Malaria</keyword>
<keyword id="KW-0472">Membrane</keyword>
<keyword id="KW-0677">Repeat</keyword>
<keyword id="KW-0732">Signal</keyword>
<keyword id="KW-0748">Sporozoite</keyword>
<evidence type="ECO:0000250" key="1">
    <source>
        <dbReference type="UniProtKB" id="P02893"/>
    </source>
</evidence>
<evidence type="ECO:0000250" key="2">
    <source>
        <dbReference type="UniProtKB" id="P19597"/>
    </source>
</evidence>
<evidence type="ECO:0000250" key="3">
    <source>
        <dbReference type="UniProtKB" id="P23093"/>
    </source>
</evidence>
<evidence type="ECO:0000250" key="4">
    <source>
        <dbReference type="UniProtKB" id="Q7K740"/>
    </source>
</evidence>
<evidence type="ECO:0000255" key="5"/>
<evidence type="ECO:0000255" key="6">
    <source>
        <dbReference type="PROSITE-ProRule" id="PRU00210"/>
    </source>
</evidence>
<evidence type="ECO:0000256" key="7">
    <source>
        <dbReference type="SAM" id="MobiDB-lite"/>
    </source>
</evidence>
<evidence type="ECO:0000269" key="8">
    <source>
    </source>
</evidence>
<evidence type="ECO:0000303" key="9">
    <source>
    </source>
</evidence>
<evidence type="ECO:0000305" key="10"/>
<evidence type="ECO:0000305" key="11">
    <source>
    </source>
</evidence>
<gene>
    <name evidence="3" type="primary">CSP</name>
</gene>
<feature type="signal peptide" evidence="5">
    <location>
        <begin position="1"/>
        <end position="20"/>
    </location>
</feature>
<feature type="chain" id="PRO_0000024520" description="Circumsporozoite protein" evidence="5">
    <location>
        <begin position="21"/>
        <end position="462"/>
    </location>
</feature>
<feature type="chain" id="PRO_0000455472" description="Circumsporozoite protein C-terminus" evidence="3">
    <location>
        <begin status="unknown"/>
        <end position="462"/>
    </location>
</feature>
<feature type="propeptide" id="PRO_0000455473" description="Removed in mature form" evidence="5">
    <location>
        <begin position="463"/>
        <end position="485"/>
    </location>
</feature>
<feature type="repeat" description="1" evidence="11">
    <location>
        <begin position="109"/>
        <end position="112"/>
    </location>
</feature>
<feature type="repeat" description="2" evidence="11">
    <location>
        <begin position="113"/>
        <end position="116"/>
    </location>
</feature>
<feature type="repeat" description="3" evidence="11">
    <location>
        <begin position="117"/>
        <end position="120"/>
    </location>
</feature>
<feature type="repeat" description="4" evidence="11">
    <location>
        <begin position="121"/>
        <end position="124"/>
    </location>
</feature>
<feature type="repeat" description="5" evidence="11">
    <location>
        <begin position="125"/>
        <end position="128"/>
    </location>
</feature>
<feature type="repeat" description="6" evidence="11">
    <location>
        <begin position="129"/>
        <end position="132"/>
    </location>
</feature>
<feature type="repeat" description="7" evidence="11">
    <location>
        <begin position="133"/>
        <end position="136"/>
    </location>
</feature>
<feature type="repeat" description="8" evidence="11">
    <location>
        <begin position="137"/>
        <end position="140"/>
    </location>
</feature>
<feature type="repeat" description="9" evidence="11">
    <location>
        <begin position="141"/>
        <end position="144"/>
    </location>
</feature>
<feature type="repeat" description="10" evidence="11">
    <location>
        <begin position="145"/>
        <end position="148"/>
    </location>
</feature>
<feature type="repeat" description="11" evidence="11">
    <location>
        <begin position="149"/>
        <end position="152"/>
    </location>
</feature>
<feature type="repeat" description="12" evidence="11">
    <location>
        <begin position="153"/>
        <end position="156"/>
    </location>
</feature>
<feature type="repeat" description="13" evidence="11">
    <location>
        <begin position="157"/>
        <end position="160"/>
    </location>
</feature>
<feature type="repeat" description="14" evidence="11">
    <location>
        <begin position="161"/>
        <end position="164"/>
    </location>
</feature>
<feature type="repeat" description="15" evidence="11">
    <location>
        <begin position="165"/>
        <end position="168"/>
    </location>
</feature>
<feature type="repeat" description="16" evidence="11">
    <location>
        <begin position="169"/>
        <end position="172"/>
    </location>
</feature>
<feature type="repeat" description="17" evidence="11">
    <location>
        <begin position="173"/>
        <end position="176"/>
    </location>
</feature>
<feature type="repeat" description="18" evidence="11">
    <location>
        <begin position="177"/>
        <end position="180"/>
    </location>
</feature>
<feature type="repeat" description="19" evidence="11">
    <location>
        <begin position="181"/>
        <end position="184"/>
    </location>
</feature>
<feature type="repeat" description="20" evidence="11">
    <location>
        <begin position="185"/>
        <end position="188"/>
    </location>
</feature>
<feature type="repeat" description="21" evidence="11">
    <location>
        <begin position="189"/>
        <end position="192"/>
    </location>
</feature>
<feature type="repeat" description="22" evidence="11">
    <location>
        <begin position="193"/>
        <end position="196"/>
    </location>
</feature>
<feature type="repeat" description="23" evidence="11">
    <location>
        <begin position="197"/>
        <end position="200"/>
    </location>
</feature>
<feature type="repeat" description="24" evidence="11">
    <location>
        <begin position="201"/>
        <end position="204"/>
    </location>
</feature>
<feature type="repeat" description="25" evidence="11">
    <location>
        <begin position="205"/>
        <end position="208"/>
    </location>
</feature>
<feature type="repeat" description="26" evidence="11">
    <location>
        <begin position="209"/>
        <end position="212"/>
    </location>
</feature>
<feature type="repeat" description="27" evidence="11">
    <location>
        <begin position="213"/>
        <end position="216"/>
    </location>
</feature>
<feature type="repeat" description="28" evidence="11">
    <location>
        <begin position="217"/>
        <end position="220"/>
    </location>
</feature>
<feature type="repeat" description="29" evidence="11">
    <location>
        <begin position="221"/>
        <end position="224"/>
    </location>
</feature>
<feature type="repeat" description="30" evidence="11">
    <location>
        <begin position="225"/>
        <end position="228"/>
    </location>
</feature>
<feature type="repeat" description="31" evidence="11">
    <location>
        <begin position="229"/>
        <end position="232"/>
    </location>
</feature>
<feature type="repeat" description="32" evidence="11">
    <location>
        <begin position="233"/>
        <end position="236"/>
    </location>
</feature>
<feature type="repeat" description="33" evidence="11">
    <location>
        <begin position="237"/>
        <end position="240"/>
    </location>
</feature>
<feature type="repeat" description="34" evidence="11">
    <location>
        <begin position="241"/>
        <end position="244"/>
    </location>
</feature>
<feature type="repeat" description="35" evidence="11">
    <location>
        <begin position="245"/>
        <end position="248"/>
    </location>
</feature>
<feature type="repeat" description="36" evidence="11">
    <location>
        <begin position="249"/>
        <end position="252"/>
    </location>
</feature>
<feature type="repeat" description="37" evidence="11">
    <location>
        <begin position="253"/>
        <end position="256"/>
    </location>
</feature>
<feature type="repeat" description="38" evidence="11">
    <location>
        <begin position="257"/>
        <end position="260"/>
    </location>
</feature>
<feature type="repeat" description="39" evidence="11">
    <location>
        <begin position="261"/>
        <end position="264"/>
    </location>
</feature>
<feature type="repeat" description="40" evidence="11">
    <location>
        <begin position="265"/>
        <end position="268"/>
    </location>
</feature>
<feature type="repeat" description="41" evidence="11">
    <location>
        <begin position="269"/>
        <end position="272"/>
    </location>
</feature>
<feature type="repeat" description="42" evidence="11">
    <location>
        <begin position="273"/>
        <end position="276"/>
    </location>
</feature>
<feature type="repeat" description="43" evidence="11">
    <location>
        <begin position="277"/>
        <end position="280"/>
    </location>
</feature>
<feature type="repeat" description="44" evidence="11">
    <location>
        <begin position="281"/>
        <end position="284"/>
    </location>
</feature>
<feature type="repeat" description="45" evidence="11">
    <location>
        <begin position="285"/>
        <end position="288"/>
    </location>
</feature>
<feature type="repeat" description="46" evidence="11">
    <location>
        <begin position="289"/>
        <end position="292"/>
    </location>
</feature>
<feature type="repeat" description="47" evidence="11">
    <location>
        <begin position="293"/>
        <end position="296"/>
    </location>
</feature>
<feature type="repeat" description="48" evidence="11">
    <location>
        <begin position="297"/>
        <end position="300"/>
    </location>
</feature>
<feature type="repeat" description="49" evidence="11">
    <location>
        <begin position="301"/>
        <end position="304"/>
    </location>
</feature>
<feature type="repeat" description="50" evidence="11">
    <location>
        <begin position="305"/>
        <end position="308"/>
    </location>
</feature>
<feature type="repeat" description="51" evidence="11">
    <location>
        <begin position="309"/>
        <end position="312"/>
    </location>
</feature>
<feature type="repeat" description="52" evidence="11">
    <location>
        <begin position="313"/>
        <end position="316"/>
    </location>
</feature>
<feature type="repeat" description="53" evidence="11">
    <location>
        <begin position="317"/>
        <end position="320"/>
    </location>
</feature>
<feature type="repeat" description="54" evidence="11">
    <location>
        <begin position="321"/>
        <end position="324"/>
    </location>
</feature>
<feature type="repeat" description="55" evidence="11">
    <location>
        <begin position="325"/>
        <end position="328"/>
    </location>
</feature>
<feature type="repeat" description="56" evidence="11">
    <location>
        <begin position="329"/>
        <end position="332"/>
    </location>
</feature>
<feature type="repeat" description="57" evidence="11">
    <location>
        <begin position="333"/>
        <end position="336"/>
    </location>
</feature>
<feature type="repeat" description="58" evidence="11">
    <location>
        <begin position="337"/>
        <end position="340"/>
    </location>
</feature>
<feature type="repeat" description="59" evidence="11">
    <location>
        <begin position="341"/>
        <end position="344"/>
    </location>
</feature>
<feature type="repeat" description="60" evidence="11">
    <location>
        <begin position="345"/>
        <end position="348"/>
    </location>
</feature>
<feature type="repeat" description="61" evidence="11">
    <location>
        <begin position="349"/>
        <end position="352"/>
    </location>
</feature>
<feature type="repeat" description="62" evidence="11">
    <location>
        <begin position="353"/>
        <end position="356"/>
    </location>
</feature>
<feature type="repeat" description="63" evidence="11">
    <location>
        <begin position="357"/>
        <end position="360"/>
    </location>
</feature>
<feature type="repeat" description="64" evidence="11">
    <location>
        <begin position="361"/>
        <end position="364"/>
    </location>
</feature>
<feature type="repeat" description="65" evidence="11">
    <location>
        <begin position="365"/>
        <end position="368"/>
    </location>
</feature>
<feature type="domain" description="TSP type-1" evidence="6">
    <location>
        <begin position="411"/>
        <end position="463"/>
    </location>
</feature>
<feature type="region of interest" description="Disordered" evidence="7">
    <location>
        <begin position="72"/>
        <end position="122"/>
    </location>
</feature>
<feature type="region of interest" description="Required for the binding to heparan sulfate proteoglycans (HSPGs) on the surface of host hepatocytes" evidence="4">
    <location>
        <begin position="84"/>
        <end position="92"/>
    </location>
</feature>
<feature type="region of interest" description="Region I; contains the proteolytic cleavage site" evidence="3">
    <location>
        <begin position="97"/>
        <end position="101"/>
    </location>
</feature>
<feature type="region of interest" description="65 X 4 AA tandem repeats of G-N-[AD]-[EA]" evidence="11">
    <location>
        <begin position="109"/>
        <end position="368"/>
    </location>
</feature>
<feature type="region of interest" description="Disordered" evidence="7">
    <location>
        <begin position="363"/>
        <end position="403"/>
    </location>
</feature>
<feature type="compositionally biased region" description="Acidic residues" evidence="7">
    <location>
        <begin position="103"/>
        <end position="114"/>
    </location>
</feature>
<feature type="compositionally biased region" description="Basic and acidic residues" evidence="7">
    <location>
        <begin position="371"/>
        <end position="390"/>
    </location>
</feature>
<feature type="lipid moiety-binding region" description="GPI-anchor amidated cysteine" evidence="5">
    <location>
        <position position="462"/>
    </location>
</feature>
<feature type="glycosylation site" description="O-linked (Fuc) threonine" evidence="2">
    <location>
        <position position="426"/>
    </location>
</feature>
<feature type="disulfide bond" evidence="4">
    <location>
        <begin position="423"/>
        <end position="457"/>
    </location>
</feature>
<feature type="disulfide bond" evidence="4">
    <location>
        <begin position="427"/>
        <end position="462"/>
    </location>
</feature>
<protein>
    <recommendedName>
        <fullName evidence="9">Circumsporozoite protein</fullName>
        <shortName evidence="9">CS</shortName>
    </recommendedName>
    <component>
        <recommendedName>
            <fullName evidence="10">Circumsporozoite protein C-terminus</fullName>
        </recommendedName>
    </component>
</protein>